<organism>
    <name type="scientific">Rickettsia typhi (strain ATCC VR-144 / Wilmington)</name>
    <dbReference type="NCBI Taxonomy" id="257363"/>
    <lineage>
        <taxon>Bacteria</taxon>
        <taxon>Pseudomonadati</taxon>
        <taxon>Pseudomonadota</taxon>
        <taxon>Alphaproteobacteria</taxon>
        <taxon>Rickettsiales</taxon>
        <taxon>Rickettsiaceae</taxon>
        <taxon>Rickettsieae</taxon>
        <taxon>Rickettsia</taxon>
        <taxon>typhus group</taxon>
    </lineage>
</organism>
<accession>Q68WT1</accession>
<dbReference type="EC" id="5.6.2.4"/>
<dbReference type="EMBL" id="AE017197">
    <property type="protein sequence ID" value="AAU03911.1"/>
    <property type="molecule type" value="Genomic_DNA"/>
</dbReference>
<dbReference type="SMR" id="Q68WT1"/>
<dbReference type="KEGG" id="rty:RT0434"/>
<dbReference type="eggNOG" id="COG0210">
    <property type="taxonomic scope" value="Bacteria"/>
</dbReference>
<dbReference type="HOGENOM" id="CLU_004585_5_2_5"/>
<dbReference type="Proteomes" id="UP000000604">
    <property type="component" value="Chromosome"/>
</dbReference>
<dbReference type="GO" id="GO:0005829">
    <property type="term" value="C:cytosol"/>
    <property type="evidence" value="ECO:0007669"/>
    <property type="project" value="TreeGrafter"/>
</dbReference>
<dbReference type="GO" id="GO:0033202">
    <property type="term" value="C:DNA helicase complex"/>
    <property type="evidence" value="ECO:0007669"/>
    <property type="project" value="TreeGrafter"/>
</dbReference>
<dbReference type="GO" id="GO:0043138">
    <property type="term" value="F:3'-5' DNA helicase activity"/>
    <property type="evidence" value="ECO:0007669"/>
    <property type="project" value="TreeGrafter"/>
</dbReference>
<dbReference type="GO" id="GO:0005524">
    <property type="term" value="F:ATP binding"/>
    <property type="evidence" value="ECO:0007669"/>
    <property type="project" value="UniProtKB-KW"/>
</dbReference>
<dbReference type="GO" id="GO:0016887">
    <property type="term" value="F:ATP hydrolysis activity"/>
    <property type="evidence" value="ECO:0007669"/>
    <property type="project" value="RHEA"/>
</dbReference>
<dbReference type="GO" id="GO:0003677">
    <property type="term" value="F:DNA binding"/>
    <property type="evidence" value="ECO:0007669"/>
    <property type="project" value="UniProtKB-KW"/>
</dbReference>
<dbReference type="GO" id="GO:0006260">
    <property type="term" value="P:DNA replication"/>
    <property type="evidence" value="ECO:0007669"/>
    <property type="project" value="UniProtKB-KW"/>
</dbReference>
<dbReference type="GO" id="GO:0000725">
    <property type="term" value="P:recombinational repair"/>
    <property type="evidence" value="ECO:0007669"/>
    <property type="project" value="TreeGrafter"/>
</dbReference>
<dbReference type="CDD" id="cd17932">
    <property type="entry name" value="DEXQc_UvrD"/>
    <property type="match status" value="1"/>
</dbReference>
<dbReference type="CDD" id="cd18807">
    <property type="entry name" value="SF1_C_UvrD"/>
    <property type="match status" value="1"/>
</dbReference>
<dbReference type="FunFam" id="3.40.50.300:FF:001890">
    <property type="entry name" value="DNA helicase"/>
    <property type="match status" value="1"/>
</dbReference>
<dbReference type="Gene3D" id="1.10.10.160">
    <property type="match status" value="1"/>
</dbReference>
<dbReference type="Gene3D" id="3.40.50.300">
    <property type="entry name" value="P-loop containing nucleotide triphosphate hydrolases"/>
    <property type="match status" value="2"/>
</dbReference>
<dbReference type="Gene3D" id="1.10.486.10">
    <property type="entry name" value="PCRA, domain 4"/>
    <property type="match status" value="1"/>
</dbReference>
<dbReference type="InterPro" id="IPR005751">
    <property type="entry name" value="ATP-dep_DNA_helicase_PcrA"/>
</dbReference>
<dbReference type="InterPro" id="IPR013986">
    <property type="entry name" value="DExx_box_DNA_helicase_dom_sf"/>
</dbReference>
<dbReference type="InterPro" id="IPR014017">
    <property type="entry name" value="DNA_helicase_UvrD-like_C"/>
</dbReference>
<dbReference type="InterPro" id="IPR000212">
    <property type="entry name" value="DNA_helicase_UvrD/REP"/>
</dbReference>
<dbReference type="InterPro" id="IPR027417">
    <property type="entry name" value="P-loop_NTPase"/>
</dbReference>
<dbReference type="InterPro" id="IPR014016">
    <property type="entry name" value="UvrD-like_ATP-bd"/>
</dbReference>
<dbReference type="NCBIfam" id="TIGR01073">
    <property type="entry name" value="pcrA"/>
    <property type="match status" value="1"/>
</dbReference>
<dbReference type="PANTHER" id="PTHR11070:SF2">
    <property type="entry name" value="ATP-DEPENDENT DNA HELICASE SRS2"/>
    <property type="match status" value="1"/>
</dbReference>
<dbReference type="PANTHER" id="PTHR11070">
    <property type="entry name" value="UVRD / RECB / PCRA DNA HELICASE FAMILY MEMBER"/>
    <property type="match status" value="1"/>
</dbReference>
<dbReference type="Pfam" id="PF00580">
    <property type="entry name" value="UvrD-helicase"/>
    <property type="match status" value="1"/>
</dbReference>
<dbReference type="Pfam" id="PF13361">
    <property type="entry name" value="UvrD_C"/>
    <property type="match status" value="1"/>
</dbReference>
<dbReference type="SUPFAM" id="SSF52540">
    <property type="entry name" value="P-loop containing nucleoside triphosphate hydrolases"/>
    <property type="match status" value="1"/>
</dbReference>
<dbReference type="PROSITE" id="PS51198">
    <property type="entry name" value="UVRD_HELICASE_ATP_BIND"/>
    <property type="match status" value="1"/>
</dbReference>
<dbReference type="PROSITE" id="PS51217">
    <property type="entry name" value="UVRD_HELICASE_CTER"/>
    <property type="match status" value="1"/>
</dbReference>
<protein>
    <recommendedName>
        <fullName>DNA helicase II</fullName>
        <ecNumber>5.6.2.4</ecNumber>
    </recommendedName>
    <alternativeName>
        <fullName evidence="4">DNA 3'-5' helicase II</fullName>
    </alternativeName>
</protein>
<sequence length="658" mass="75502">MKDKMQNQNFMHTLNSEQKKAALHTEGPLLLLAGAGTGKTKVLTSRIANIIQQNLALPHNILAVTFTNKAAKEMSERVHNLINCYGVNIGTFHSMAAKILRDQIENLNLGLNNKFTIISHDDQLTLVKDIVKLKKDIDTKKYTPKLIHIIISRWKDQGLLPSKLSASDTNLPLQRVAKLIYEEYQKNLLISNVLDFGDLLLYNNELFIKNPEILKYYQEKYRYILIDEYQDTNIAQYLWARMLASLYRNICCVGDDDQSIYGWRGAEVGNILRFEKDFAGATIIKLEQNYRSTLPILAAASNVINNNKNRHSKTLWTDSASGEKIKIISCLSDKEEARYIACEIDKLVREERYHAGNIAILVRAGFQTRSFEEAFINSAMPYKIIGGLRFYERMEIRDVLAYIRISLNQNDNLALERIINVPKRAIGAASLNKIRSYALERNISNFVAIKEILETGIFKAKSYESLKDLLTKIDNWYEKFITDTPINVVKTILDDSGYLSMLQEEKTEEAFGRIENINEMLRAIAEFNDIHDFIEHSSLVMENEVLETNYGGSVTIMTLHAAKGLEFDVVFLPGWEEGVFPSQRSLDEDGEKGLEEERRIAYVGITRAKKDLYITHAESRKIFYEIVHSCPSRFINEIPDEITIRTSSMKKYNSFYKF</sequence>
<keyword id="KW-0067">ATP-binding</keyword>
<keyword id="KW-0227">DNA damage</keyword>
<keyword id="KW-0234">DNA repair</keyword>
<keyword id="KW-0235">DNA replication</keyword>
<keyword id="KW-0238">DNA-binding</keyword>
<keyword id="KW-0347">Helicase</keyword>
<keyword id="KW-0378">Hydrolase</keyword>
<keyword id="KW-0413">Isomerase</keyword>
<keyword id="KW-0547">Nucleotide-binding</keyword>
<reference key="1">
    <citation type="journal article" date="2004" name="J. Bacteriol.">
        <title>Complete genome sequence of Rickettsia typhi and comparison with sequences of other Rickettsiae.</title>
        <authorList>
            <person name="McLeod M.P."/>
            <person name="Qin X."/>
            <person name="Karpathy S.E."/>
            <person name="Gioia J."/>
            <person name="Highlander S.K."/>
            <person name="Fox G.E."/>
            <person name="McNeill T.Z."/>
            <person name="Jiang H."/>
            <person name="Muzny D."/>
            <person name="Jacob L.S."/>
            <person name="Hawes A.C."/>
            <person name="Sodergren E."/>
            <person name="Gill R."/>
            <person name="Hume J."/>
            <person name="Morgan M."/>
            <person name="Fan G."/>
            <person name="Amin A.G."/>
            <person name="Gibbs R.A."/>
            <person name="Hong C."/>
            <person name="Yu X.-J."/>
            <person name="Walker D.H."/>
            <person name="Weinstock G.M."/>
        </authorList>
    </citation>
    <scope>NUCLEOTIDE SEQUENCE [LARGE SCALE GENOMIC DNA]</scope>
    <source>
        <strain>ATCC VR-144 / Wilmington</strain>
    </source>
</reference>
<evidence type="ECO:0000250" key="1"/>
<evidence type="ECO:0000255" key="2">
    <source>
        <dbReference type="PROSITE-ProRule" id="PRU00560"/>
    </source>
</evidence>
<evidence type="ECO:0000255" key="3">
    <source>
        <dbReference type="PROSITE-ProRule" id="PRU00617"/>
    </source>
</evidence>
<evidence type="ECO:0000305" key="4"/>
<proteinExistence type="inferred from homology"/>
<feature type="chain" id="PRO_0000286461" description="DNA helicase II">
    <location>
        <begin position="1"/>
        <end position="658"/>
    </location>
</feature>
<feature type="domain" description="UvrD-like helicase ATP-binding" evidence="2">
    <location>
        <begin position="12"/>
        <end position="293"/>
    </location>
</feature>
<feature type="domain" description="UvrD-like helicase C-terminal" evidence="3">
    <location>
        <begin position="294"/>
        <end position="564"/>
    </location>
</feature>
<feature type="binding site" evidence="2">
    <location>
        <begin position="36"/>
        <end position="41"/>
    </location>
    <ligand>
        <name>ATP</name>
        <dbReference type="ChEBI" id="CHEBI:30616"/>
    </ligand>
</feature>
<feature type="binding site" evidence="1">
    <location>
        <position position="291"/>
    </location>
    <ligand>
        <name>ATP</name>
        <dbReference type="ChEBI" id="CHEBI:30616"/>
    </ligand>
</feature>
<comment type="function">
    <text evidence="1">Has both ATPase and helicase activities. Unwinds DNA duplexes with 3' to 5' polarity with respect to the bound strand and initiates unwinding most effectively when a single-stranded region is present. Involved in the post-incision events of nucleotide excision repair and methyl-directed mismatch repair (By similarity).</text>
</comment>
<comment type="catalytic activity">
    <reaction>
        <text>Couples ATP hydrolysis with the unwinding of duplex DNA by translocating in the 3'-5' direction.</text>
        <dbReference type="EC" id="5.6.2.4"/>
    </reaction>
</comment>
<comment type="catalytic activity">
    <reaction>
        <text>ATP + H2O = ADP + phosphate + H(+)</text>
        <dbReference type="Rhea" id="RHEA:13065"/>
        <dbReference type="ChEBI" id="CHEBI:15377"/>
        <dbReference type="ChEBI" id="CHEBI:15378"/>
        <dbReference type="ChEBI" id="CHEBI:30616"/>
        <dbReference type="ChEBI" id="CHEBI:43474"/>
        <dbReference type="ChEBI" id="CHEBI:456216"/>
        <dbReference type="EC" id="5.6.2.4"/>
    </reaction>
</comment>
<comment type="similarity">
    <text evidence="4">Belongs to the helicase family. UvrD subfamily.</text>
</comment>
<name>UVRD_RICTY</name>
<gene>
    <name type="primary">uvrD</name>
    <name type="ordered locus">RT0434</name>
</gene>